<name>RS6_CITK8</name>
<gene>
    <name evidence="1" type="primary">rpsF</name>
    <name type="ordered locus">CKO_03633</name>
</gene>
<dbReference type="EMBL" id="CP000822">
    <property type="protein sequence ID" value="ABV14712.1"/>
    <property type="molecule type" value="Genomic_DNA"/>
</dbReference>
<dbReference type="RefSeq" id="WP_012134408.1">
    <property type="nucleotide sequence ID" value="NC_009792.1"/>
</dbReference>
<dbReference type="SMR" id="A8AMJ8"/>
<dbReference type="STRING" id="290338.CKO_03633"/>
<dbReference type="GeneID" id="45137345"/>
<dbReference type="KEGG" id="cko:CKO_03633"/>
<dbReference type="HOGENOM" id="CLU_113441_6_1_6"/>
<dbReference type="OrthoDB" id="9812702at2"/>
<dbReference type="Proteomes" id="UP000008148">
    <property type="component" value="Chromosome"/>
</dbReference>
<dbReference type="GO" id="GO:0022627">
    <property type="term" value="C:cytosolic small ribosomal subunit"/>
    <property type="evidence" value="ECO:0007669"/>
    <property type="project" value="TreeGrafter"/>
</dbReference>
<dbReference type="GO" id="GO:0070181">
    <property type="term" value="F:small ribosomal subunit rRNA binding"/>
    <property type="evidence" value="ECO:0007669"/>
    <property type="project" value="TreeGrafter"/>
</dbReference>
<dbReference type="GO" id="GO:0003735">
    <property type="term" value="F:structural constituent of ribosome"/>
    <property type="evidence" value="ECO:0007669"/>
    <property type="project" value="InterPro"/>
</dbReference>
<dbReference type="GO" id="GO:0006412">
    <property type="term" value="P:translation"/>
    <property type="evidence" value="ECO:0007669"/>
    <property type="project" value="UniProtKB-UniRule"/>
</dbReference>
<dbReference type="CDD" id="cd00473">
    <property type="entry name" value="bS6"/>
    <property type="match status" value="1"/>
</dbReference>
<dbReference type="FunFam" id="3.30.70.60:FF:000003">
    <property type="entry name" value="30S ribosomal protein S6"/>
    <property type="match status" value="1"/>
</dbReference>
<dbReference type="Gene3D" id="3.30.70.60">
    <property type="match status" value="1"/>
</dbReference>
<dbReference type="HAMAP" id="MF_00360">
    <property type="entry name" value="Ribosomal_bS6"/>
    <property type="match status" value="1"/>
</dbReference>
<dbReference type="InterPro" id="IPR000529">
    <property type="entry name" value="Ribosomal_bS6"/>
</dbReference>
<dbReference type="InterPro" id="IPR020815">
    <property type="entry name" value="Ribosomal_bS6_CS"/>
</dbReference>
<dbReference type="InterPro" id="IPR035980">
    <property type="entry name" value="Ribosomal_bS6_sf"/>
</dbReference>
<dbReference type="InterPro" id="IPR020814">
    <property type="entry name" value="Ribosomal_S6_plastid/chlpt"/>
</dbReference>
<dbReference type="InterPro" id="IPR014717">
    <property type="entry name" value="Transl_elong_EF1B/ribsomal_bS6"/>
</dbReference>
<dbReference type="NCBIfam" id="TIGR00166">
    <property type="entry name" value="S6"/>
    <property type="match status" value="1"/>
</dbReference>
<dbReference type="PANTHER" id="PTHR21011">
    <property type="entry name" value="MITOCHONDRIAL 28S RIBOSOMAL PROTEIN S6"/>
    <property type="match status" value="1"/>
</dbReference>
<dbReference type="PANTHER" id="PTHR21011:SF1">
    <property type="entry name" value="SMALL RIBOSOMAL SUBUNIT PROTEIN BS6M"/>
    <property type="match status" value="1"/>
</dbReference>
<dbReference type="Pfam" id="PF01250">
    <property type="entry name" value="Ribosomal_S6"/>
    <property type="match status" value="1"/>
</dbReference>
<dbReference type="SUPFAM" id="SSF54995">
    <property type="entry name" value="Ribosomal protein S6"/>
    <property type="match status" value="1"/>
</dbReference>
<dbReference type="PROSITE" id="PS01048">
    <property type="entry name" value="RIBOSOMAL_S6"/>
    <property type="match status" value="1"/>
</dbReference>
<keyword id="KW-1185">Reference proteome</keyword>
<keyword id="KW-0687">Ribonucleoprotein</keyword>
<keyword id="KW-0689">Ribosomal protein</keyword>
<keyword id="KW-0694">RNA-binding</keyword>
<keyword id="KW-0699">rRNA-binding</keyword>
<protein>
    <recommendedName>
        <fullName evidence="1">Small ribosomal subunit protein bS6</fullName>
    </recommendedName>
    <alternativeName>
        <fullName evidence="3">30S ribosomal protein S6</fullName>
    </alternativeName>
</protein>
<comment type="function">
    <text evidence="1">Binds together with bS18 to 16S ribosomal RNA.</text>
</comment>
<comment type="similarity">
    <text evidence="1">Belongs to the bacterial ribosomal protein bS6 family.</text>
</comment>
<feature type="chain" id="PRO_1000005246" description="Small ribosomal subunit protein bS6">
    <location>
        <begin position="1"/>
        <end position="131"/>
    </location>
</feature>
<feature type="region of interest" description="Disordered" evidence="2">
    <location>
        <begin position="98"/>
        <end position="131"/>
    </location>
</feature>
<feature type="compositionally biased region" description="Basic and acidic residues" evidence="2">
    <location>
        <begin position="104"/>
        <end position="116"/>
    </location>
</feature>
<feature type="compositionally biased region" description="Acidic residues" evidence="2">
    <location>
        <begin position="120"/>
        <end position="131"/>
    </location>
</feature>
<evidence type="ECO:0000255" key="1">
    <source>
        <dbReference type="HAMAP-Rule" id="MF_00360"/>
    </source>
</evidence>
<evidence type="ECO:0000256" key="2">
    <source>
        <dbReference type="SAM" id="MobiDB-lite"/>
    </source>
</evidence>
<evidence type="ECO:0000305" key="3"/>
<sequence>MRHYEIVFMVHPDQSEQVPGMIERYTGAITGAEGKIHRLEDWGRRQLAYPINKLHKAHYVLLNVEAPQEVIDELETNFRFNDAVIRSMVMRTKHAVTEASPMVKAKDERRERRDDFANETADDADAGDSEE</sequence>
<reference key="1">
    <citation type="submission" date="2007-08" db="EMBL/GenBank/DDBJ databases">
        <authorList>
            <consortium name="The Citrobacter koseri Genome Sequencing Project"/>
            <person name="McClelland M."/>
            <person name="Sanderson E.K."/>
            <person name="Porwollik S."/>
            <person name="Spieth J."/>
            <person name="Clifton W.S."/>
            <person name="Latreille P."/>
            <person name="Courtney L."/>
            <person name="Wang C."/>
            <person name="Pepin K."/>
            <person name="Bhonagiri V."/>
            <person name="Nash W."/>
            <person name="Johnson M."/>
            <person name="Thiruvilangam P."/>
            <person name="Wilson R."/>
        </authorList>
    </citation>
    <scope>NUCLEOTIDE SEQUENCE [LARGE SCALE GENOMIC DNA]</scope>
    <source>
        <strain>ATCC BAA-895 / CDC 4225-83 / SGSC4696</strain>
    </source>
</reference>
<organism>
    <name type="scientific">Citrobacter koseri (strain ATCC BAA-895 / CDC 4225-83 / SGSC4696)</name>
    <dbReference type="NCBI Taxonomy" id="290338"/>
    <lineage>
        <taxon>Bacteria</taxon>
        <taxon>Pseudomonadati</taxon>
        <taxon>Pseudomonadota</taxon>
        <taxon>Gammaproteobacteria</taxon>
        <taxon>Enterobacterales</taxon>
        <taxon>Enterobacteriaceae</taxon>
        <taxon>Citrobacter</taxon>
    </lineage>
</organism>
<accession>A8AMJ8</accession>
<proteinExistence type="inferred from homology"/>